<sequence>MSLQETIIQELGVKPVIDAQEEIRRSIDFLKRYLKKHPFLKTFVLGISGGQDSTLAGRLAQLAMEELRAETGDDSYKFIAVRLPYGVQADEADAQKALAFIQPDVSLVVNIKESADAMTAAVEATGSPVSDFNKGNIKARCRMIAQYALAGSHSGAVIGTDHAAENITGFFTKFGDGGADILPLYRLNKRQGKQLLQKLGAEPALYEKIPTADLEEDKPGLADEVALGVTYAEIDDYLEGKTISPEAQATIENWWHKGQHKRHLPITVFDDFWE</sequence>
<protein>
    <recommendedName>
        <fullName evidence="1">NH(3)-dependent NAD(+) synthetase</fullName>
        <ecNumber evidence="1">6.3.1.5</ecNumber>
    </recommendedName>
</protein>
<comment type="function">
    <text evidence="1">Catalyzes the ATP-dependent amidation of deamido-NAD to form NAD. Uses ammonia as a nitrogen source.</text>
</comment>
<comment type="catalytic activity">
    <reaction evidence="1">
        <text>deamido-NAD(+) + NH4(+) + ATP = AMP + diphosphate + NAD(+) + H(+)</text>
        <dbReference type="Rhea" id="RHEA:21188"/>
        <dbReference type="ChEBI" id="CHEBI:15378"/>
        <dbReference type="ChEBI" id="CHEBI:28938"/>
        <dbReference type="ChEBI" id="CHEBI:30616"/>
        <dbReference type="ChEBI" id="CHEBI:33019"/>
        <dbReference type="ChEBI" id="CHEBI:57540"/>
        <dbReference type="ChEBI" id="CHEBI:58437"/>
        <dbReference type="ChEBI" id="CHEBI:456215"/>
        <dbReference type="EC" id="6.3.1.5"/>
    </reaction>
</comment>
<comment type="pathway">
    <text evidence="1">Cofactor biosynthesis; NAD(+) biosynthesis; NAD(+) from deamido-NAD(+) (ammonia route): step 1/1.</text>
</comment>
<comment type="subunit">
    <text evidence="1">Homodimer.</text>
</comment>
<comment type="similarity">
    <text evidence="1">Belongs to the NAD synthetase family.</text>
</comment>
<keyword id="KW-0067">ATP-binding</keyword>
<keyword id="KW-0436">Ligase</keyword>
<keyword id="KW-0460">Magnesium</keyword>
<keyword id="KW-0479">Metal-binding</keyword>
<keyword id="KW-0520">NAD</keyword>
<keyword id="KW-0547">Nucleotide-binding</keyword>
<keyword id="KW-1185">Reference proteome</keyword>
<gene>
    <name evidence="1" type="primary">nadE</name>
    <name type="ordered locus">SPD_1250</name>
</gene>
<accession>Q04JT1</accession>
<dbReference type="EC" id="6.3.1.5" evidence="1"/>
<dbReference type="EMBL" id="CP000410">
    <property type="protein sequence ID" value="ABJ54089.1"/>
    <property type="molecule type" value="Genomic_DNA"/>
</dbReference>
<dbReference type="RefSeq" id="WP_000058033.1">
    <property type="nucleotide sequence ID" value="NZ_JAMLJR010000005.1"/>
</dbReference>
<dbReference type="SMR" id="Q04JT1"/>
<dbReference type="PaxDb" id="373153-SPD_1250"/>
<dbReference type="GeneID" id="45653323"/>
<dbReference type="KEGG" id="spd:SPD_1250"/>
<dbReference type="eggNOG" id="COG0171">
    <property type="taxonomic scope" value="Bacteria"/>
</dbReference>
<dbReference type="HOGENOM" id="CLU_059327_3_0_9"/>
<dbReference type="BioCyc" id="SPNE373153:G1G6V-1351-MONOMER"/>
<dbReference type="UniPathway" id="UPA00253">
    <property type="reaction ID" value="UER00333"/>
</dbReference>
<dbReference type="Proteomes" id="UP000001452">
    <property type="component" value="Chromosome"/>
</dbReference>
<dbReference type="GO" id="GO:0005737">
    <property type="term" value="C:cytoplasm"/>
    <property type="evidence" value="ECO:0007669"/>
    <property type="project" value="InterPro"/>
</dbReference>
<dbReference type="GO" id="GO:0005524">
    <property type="term" value="F:ATP binding"/>
    <property type="evidence" value="ECO:0007669"/>
    <property type="project" value="UniProtKB-UniRule"/>
</dbReference>
<dbReference type="GO" id="GO:0004359">
    <property type="term" value="F:glutaminase activity"/>
    <property type="evidence" value="ECO:0007669"/>
    <property type="project" value="InterPro"/>
</dbReference>
<dbReference type="GO" id="GO:0046872">
    <property type="term" value="F:metal ion binding"/>
    <property type="evidence" value="ECO:0007669"/>
    <property type="project" value="UniProtKB-KW"/>
</dbReference>
<dbReference type="GO" id="GO:0003952">
    <property type="term" value="F:NAD+ synthase (glutamine-hydrolyzing) activity"/>
    <property type="evidence" value="ECO:0007669"/>
    <property type="project" value="InterPro"/>
</dbReference>
<dbReference type="GO" id="GO:0008795">
    <property type="term" value="F:NAD+ synthase activity"/>
    <property type="evidence" value="ECO:0007669"/>
    <property type="project" value="UniProtKB-UniRule"/>
</dbReference>
<dbReference type="GO" id="GO:0009435">
    <property type="term" value="P:NAD biosynthetic process"/>
    <property type="evidence" value="ECO:0007669"/>
    <property type="project" value="UniProtKB-UniRule"/>
</dbReference>
<dbReference type="CDD" id="cd00553">
    <property type="entry name" value="NAD_synthase"/>
    <property type="match status" value="1"/>
</dbReference>
<dbReference type="FunFam" id="3.40.50.620:FF:000015">
    <property type="entry name" value="NH(3)-dependent NAD(+) synthetase"/>
    <property type="match status" value="1"/>
</dbReference>
<dbReference type="Gene3D" id="3.40.50.620">
    <property type="entry name" value="HUPs"/>
    <property type="match status" value="1"/>
</dbReference>
<dbReference type="HAMAP" id="MF_00193">
    <property type="entry name" value="NadE_ammonia_dep"/>
    <property type="match status" value="1"/>
</dbReference>
<dbReference type="InterPro" id="IPR022310">
    <property type="entry name" value="NAD/GMP_synthase"/>
</dbReference>
<dbReference type="InterPro" id="IPR003694">
    <property type="entry name" value="NAD_synthase"/>
</dbReference>
<dbReference type="InterPro" id="IPR022926">
    <property type="entry name" value="NH(3)-dep_NAD(+)_synth"/>
</dbReference>
<dbReference type="InterPro" id="IPR014729">
    <property type="entry name" value="Rossmann-like_a/b/a_fold"/>
</dbReference>
<dbReference type="NCBIfam" id="TIGR00552">
    <property type="entry name" value="nadE"/>
    <property type="match status" value="1"/>
</dbReference>
<dbReference type="NCBIfam" id="NF001979">
    <property type="entry name" value="PRK00768.1"/>
    <property type="match status" value="1"/>
</dbReference>
<dbReference type="PANTHER" id="PTHR23090">
    <property type="entry name" value="NH 3 /GLUTAMINE-DEPENDENT NAD + SYNTHETASE"/>
    <property type="match status" value="1"/>
</dbReference>
<dbReference type="PANTHER" id="PTHR23090:SF7">
    <property type="entry name" value="NH(3)-DEPENDENT NAD(+) SYNTHETASE"/>
    <property type="match status" value="1"/>
</dbReference>
<dbReference type="Pfam" id="PF02540">
    <property type="entry name" value="NAD_synthase"/>
    <property type="match status" value="1"/>
</dbReference>
<dbReference type="SUPFAM" id="SSF52402">
    <property type="entry name" value="Adenine nucleotide alpha hydrolases-like"/>
    <property type="match status" value="1"/>
</dbReference>
<evidence type="ECO:0000255" key="1">
    <source>
        <dbReference type="HAMAP-Rule" id="MF_00193"/>
    </source>
</evidence>
<organism>
    <name type="scientific">Streptococcus pneumoniae serotype 2 (strain D39 / NCTC 7466)</name>
    <dbReference type="NCBI Taxonomy" id="373153"/>
    <lineage>
        <taxon>Bacteria</taxon>
        <taxon>Bacillati</taxon>
        <taxon>Bacillota</taxon>
        <taxon>Bacilli</taxon>
        <taxon>Lactobacillales</taxon>
        <taxon>Streptococcaceae</taxon>
        <taxon>Streptococcus</taxon>
    </lineage>
</organism>
<reference key="1">
    <citation type="journal article" date="2007" name="J. Bacteriol.">
        <title>Genome sequence of Avery's virulent serotype 2 strain D39 of Streptococcus pneumoniae and comparison with that of unencapsulated laboratory strain R6.</title>
        <authorList>
            <person name="Lanie J.A."/>
            <person name="Ng W.-L."/>
            <person name="Kazmierczak K.M."/>
            <person name="Andrzejewski T.M."/>
            <person name="Davidsen T.M."/>
            <person name="Wayne K.J."/>
            <person name="Tettelin H."/>
            <person name="Glass J.I."/>
            <person name="Winkler M.E."/>
        </authorList>
    </citation>
    <scope>NUCLEOTIDE SEQUENCE [LARGE SCALE GENOMIC DNA]</scope>
    <source>
        <strain>D39 / NCTC 7466</strain>
    </source>
</reference>
<feature type="chain" id="PRO_1000077625" description="NH(3)-dependent NAD(+) synthetase">
    <location>
        <begin position="1"/>
        <end position="274"/>
    </location>
</feature>
<feature type="binding site" evidence="1">
    <location>
        <begin position="46"/>
        <end position="53"/>
    </location>
    <ligand>
        <name>ATP</name>
        <dbReference type="ChEBI" id="CHEBI:30616"/>
    </ligand>
</feature>
<feature type="binding site" evidence="1">
    <location>
        <position position="52"/>
    </location>
    <ligand>
        <name>Mg(2+)</name>
        <dbReference type="ChEBI" id="CHEBI:18420"/>
    </ligand>
</feature>
<feature type="binding site" evidence="1">
    <location>
        <position position="140"/>
    </location>
    <ligand>
        <name>deamido-NAD(+)</name>
        <dbReference type="ChEBI" id="CHEBI:58437"/>
    </ligand>
</feature>
<feature type="binding site" evidence="1">
    <location>
        <position position="160"/>
    </location>
    <ligand>
        <name>ATP</name>
        <dbReference type="ChEBI" id="CHEBI:30616"/>
    </ligand>
</feature>
<feature type="binding site" evidence="1">
    <location>
        <position position="165"/>
    </location>
    <ligand>
        <name>Mg(2+)</name>
        <dbReference type="ChEBI" id="CHEBI:18420"/>
    </ligand>
</feature>
<feature type="binding site" evidence="1">
    <location>
        <position position="173"/>
    </location>
    <ligand>
        <name>deamido-NAD(+)</name>
        <dbReference type="ChEBI" id="CHEBI:58437"/>
    </ligand>
</feature>
<feature type="binding site" evidence="1">
    <location>
        <position position="180"/>
    </location>
    <ligand>
        <name>deamido-NAD(+)</name>
        <dbReference type="ChEBI" id="CHEBI:58437"/>
    </ligand>
</feature>
<feature type="binding site" evidence="1">
    <location>
        <position position="189"/>
    </location>
    <ligand>
        <name>ATP</name>
        <dbReference type="ChEBI" id="CHEBI:30616"/>
    </ligand>
</feature>
<feature type="binding site" evidence="1">
    <location>
        <position position="211"/>
    </location>
    <ligand>
        <name>ATP</name>
        <dbReference type="ChEBI" id="CHEBI:30616"/>
    </ligand>
</feature>
<feature type="binding site" evidence="1">
    <location>
        <begin position="260"/>
        <end position="261"/>
    </location>
    <ligand>
        <name>deamido-NAD(+)</name>
        <dbReference type="ChEBI" id="CHEBI:58437"/>
    </ligand>
</feature>
<proteinExistence type="inferred from homology"/>
<name>NADE_STRP2</name>